<proteinExistence type="inferred from homology"/>
<gene>
    <name type="ordered locus">PA0951</name>
</gene>
<feature type="chain" id="PRO_0000200992" description="UPF0761 membrane protein PA0951">
    <location>
        <begin position="1"/>
        <end position="411"/>
    </location>
</feature>
<feature type="transmembrane region" description="Helical" evidence="1">
    <location>
        <begin position="36"/>
        <end position="56"/>
    </location>
</feature>
<feature type="transmembrane region" description="Helical" evidence="1">
    <location>
        <begin position="92"/>
        <end position="112"/>
    </location>
</feature>
<feature type="transmembrane region" description="Helical" evidence="1">
    <location>
        <begin position="132"/>
        <end position="152"/>
    </location>
</feature>
<feature type="transmembrane region" description="Helical" evidence="1">
    <location>
        <begin position="174"/>
        <end position="194"/>
    </location>
</feature>
<feature type="transmembrane region" description="Helical" evidence="1">
    <location>
        <begin position="207"/>
        <end position="229"/>
    </location>
</feature>
<feature type="transmembrane region" description="Helical" evidence="1">
    <location>
        <begin position="244"/>
        <end position="264"/>
    </location>
</feature>
<reference key="1">
    <citation type="journal article" date="2000" name="Nature">
        <title>Complete genome sequence of Pseudomonas aeruginosa PAO1, an opportunistic pathogen.</title>
        <authorList>
            <person name="Stover C.K."/>
            <person name="Pham X.-Q.T."/>
            <person name="Erwin A.L."/>
            <person name="Mizoguchi S.D."/>
            <person name="Warrener P."/>
            <person name="Hickey M.J."/>
            <person name="Brinkman F.S.L."/>
            <person name="Hufnagle W.O."/>
            <person name="Kowalik D.J."/>
            <person name="Lagrou M."/>
            <person name="Garber R.L."/>
            <person name="Goltry L."/>
            <person name="Tolentino E."/>
            <person name="Westbrock-Wadman S."/>
            <person name="Yuan Y."/>
            <person name="Brody L.L."/>
            <person name="Coulter S.N."/>
            <person name="Folger K.R."/>
            <person name="Kas A."/>
            <person name="Larbig K."/>
            <person name="Lim R.M."/>
            <person name="Smith K.A."/>
            <person name="Spencer D.H."/>
            <person name="Wong G.K.-S."/>
            <person name="Wu Z."/>
            <person name="Paulsen I.T."/>
            <person name="Reizer J."/>
            <person name="Saier M.H. Jr."/>
            <person name="Hancock R.E.W."/>
            <person name="Lory S."/>
            <person name="Olson M.V."/>
        </authorList>
    </citation>
    <scope>NUCLEOTIDE SEQUENCE [LARGE SCALE GENOMIC DNA]</scope>
    <source>
        <strain>ATCC 15692 / DSM 22644 / CIP 104116 / JCM 14847 / LMG 12228 / 1C / PRS 101 / PAO1</strain>
    </source>
</reference>
<protein>
    <recommendedName>
        <fullName evidence="1">UPF0761 membrane protein PA0951</fullName>
    </recommendedName>
</protein>
<accession>Q9I507</accession>
<sequence length="411" mass="46201">MREHFNDGVEFARFLAHRFVTDKAPNSAAALTYTTLFAVVPMMTVMFSMLSLIPAFHGMGESIQTFIFRNFVPSAGEAVETYLKSFTTQARHLTWVGVVFLAVTAFTMLVTIEKAFNEIWRVRQPRRGVGRFLLYWAILSLGPLLLGAGFAVTTYITSLSLLHGPDALPGAETLLGLMPLAFSVAAFTLLYSAVPNARVPVRHALMGGVFTAVLFEAAKTLFGLYVSLFPGYQLIYGAFATVPIFLLWIYLSWMIVLFGAVLVCNLSSSRLWRRRSLPKLIVLLGVLRVFLQRQQLGQSLRLTHLHRAGWLLPEDEWEELLDFLEKEQFVCRAGGGEWVLCRDLGAYSLHRLLNRCPWPMPSRERMPASLDEAWYPPFQQAMERLQVEQEALFGESLAHWLADGTSGAKVT</sequence>
<name>Y951_PSEAE</name>
<evidence type="ECO:0000255" key="1">
    <source>
        <dbReference type="HAMAP-Rule" id="MF_00672"/>
    </source>
</evidence>
<dbReference type="EMBL" id="AE004091">
    <property type="protein sequence ID" value="AAG04340.1"/>
    <property type="molecule type" value="Genomic_DNA"/>
</dbReference>
<dbReference type="PIR" id="F83526">
    <property type="entry name" value="F83526"/>
</dbReference>
<dbReference type="RefSeq" id="NP_249642.1">
    <property type="nucleotide sequence ID" value="NC_002516.2"/>
</dbReference>
<dbReference type="RefSeq" id="WP_003112579.1">
    <property type="nucleotide sequence ID" value="NZ_QZGE01000007.1"/>
</dbReference>
<dbReference type="SMR" id="Q9I507"/>
<dbReference type="FunCoup" id="Q9I507">
    <property type="interactions" value="182"/>
</dbReference>
<dbReference type="STRING" id="208964.PA0951"/>
<dbReference type="PaxDb" id="208964-PA0951"/>
<dbReference type="DNASU" id="881910"/>
<dbReference type="GeneID" id="881910"/>
<dbReference type="KEGG" id="pae:PA0951"/>
<dbReference type="PATRIC" id="fig|208964.12.peg.988"/>
<dbReference type="PseudoCAP" id="PA0951"/>
<dbReference type="HOGENOM" id="CLU_032288_1_0_6"/>
<dbReference type="InParanoid" id="Q9I507"/>
<dbReference type="OrthoDB" id="9808671at2"/>
<dbReference type="PhylomeDB" id="Q9I507"/>
<dbReference type="BioCyc" id="PAER208964:G1FZ6-971-MONOMER"/>
<dbReference type="Proteomes" id="UP000002438">
    <property type="component" value="Chromosome"/>
</dbReference>
<dbReference type="GO" id="GO:0005886">
    <property type="term" value="C:plasma membrane"/>
    <property type="evidence" value="ECO:0000318"/>
    <property type="project" value="GO_Central"/>
</dbReference>
<dbReference type="HAMAP" id="MF_00672">
    <property type="entry name" value="UPF0761"/>
    <property type="match status" value="1"/>
</dbReference>
<dbReference type="InterPro" id="IPR023679">
    <property type="entry name" value="UPF0761_bac"/>
</dbReference>
<dbReference type="InterPro" id="IPR017039">
    <property type="entry name" value="Virul_fac_BrkB"/>
</dbReference>
<dbReference type="NCBIfam" id="TIGR00765">
    <property type="entry name" value="yihY_not_rbn"/>
    <property type="match status" value="1"/>
</dbReference>
<dbReference type="PANTHER" id="PTHR30213">
    <property type="entry name" value="INNER MEMBRANE PROTEIN YHJD"/>
    <property type="match status" value="1"/>
</dbReference>
<dbReference type="PANTHER" id="PTHR30213:SF0">
    <property type="entry name" value="UPF0761 MEMBRANE PROTEIN YIHY"/>
    <property type="match status" value="1"/>
</dbReference>
<dbReference type="Pfam" id="PF03631">
    <property type="entry name" value="Virul_fac_BrkB"/>
    <property type="match status" value="1"/>
</dbReference>
<organism>
    <name type="scientific">Pseudomonas aeruginosa (strain ATCC 15692 / DSM 22644 / CIP 104116 / JCM 14847 / LMG 12228 / 1C / PRS 101 / PAO1)</name>
    <dbReference type="NCBI Taxonomy" id="208964"/>
    <lineage>
        <taxon>Bacteria</taxon>
        <taxon>Pseudomonadati</taxon>
        <taxon>Pseudomonadota</taxon>
        <taxon>Gammaproteobacteria</taxon>
        <taxon>Pseudomonadales</taxon>
        <taxon>Pseudomonadaceae</taxon>
        <taxon>Pseudomonas</taxon>
    </lineage>
</organism>
<comment type="subcellular location">
    <subcellularLocation>
        <location evidence="1">Cell inner membrane</location>
        <topology evidence="1">Multi-pass membrane protein</topology>
    </subcellularLocation>
</comment>
<comment type="similarity">
    <text evidence="1">Belongs to the UPF0761 family.</text>
</comment>
<keyword id="KW-0997">Cell inner membrane</keyword>
<keyword id="KW-1003">Cell membrane</keyword>
<keyword id="KW-0472">Membrane</keyword>
<keyword id="KW-1185">Reference proteome</keyword>
<keyword id="KW-0812">Transmembrane</keyword>
<keyword id="KW-1133">Transmembrane helix</keyword>